<accession>Q06125</accession>
<accession>Q5UZK9</accession>
<gene>
    <name evidence="1" type="primary">rps27ae</name>
    <name type="ordered locus">rrnAC2489</name>
</gene>
<keyword id="KW-0903">Direct protein sequencing</keyword>
<keyword id="KW-0479">Metal-binding</keyword>
<keyword id="KW-1185">Reference proteome</keyword>
<keyword id="KW-0687">Ribonucleoprotein</keyword>
<keyword id="KW-0689">Ribosomal protein</keyword>
<keyword id="KW-0862">Zinc</keyword>
<keyword id="KW-0863">Zinc-finger</keyword>
<sequence>MPHNEYYNDDGELDRETCPRCGDTVLAEHEDRQHCGKCGYTEWK</sequence>
<protein>
    <recommendedName>
        <fullName evidence="1">Small ribosomal subunit protein eS31</fullName>
    </recommendedName>
    <alternativeName>
        <fullName evidence="2">30S ribosomal protein S27ae</fullName>
    </alternativeName>
    <alternativeName>
        <fullName>HSH</fullName>
    </alternativeName>
</protein>
<feature type="initiator methionine" description="Removed">
    <location>
        <position position="1"/>
    </location>
</feature>
<feature type="chain" id="PRO_0000137691" description="Small ribosomal subunit protein eS31">
    <location>
        <begin position="2"/>
        <end position="44"/>
    </location>
</feature>
<feature type="zinc finger region" description="C4-type" evidence="1">
    <location>
        <begin position="18"/>
        <end position="38"/>
    </location>
</feature>
<feature type="binding site" evidence="1">
    <location>
        <position position="18"/>
    </location>
    <ligand>
        <name>Zn(2+)</name>
        <dbReference type="ChEBI" id="CHEBI:29105"/>
    </ligand>
</feature>
<feature type="binding site" evidence="1">
    <location>
        <position position="21"/>
    </location>
    <ligand>
        <name>Zn(2+)</name>
        <dbReference type="ChEBI" id="CHEBI:29105"/>
    </ligand>
</feature>
<feature type="binding site" evidence="1">
    <location>
        <position position="35"/>
    </location>
    <ligand>
        <name>Zn(2+)</name>
        <dbReference type="ChEBI" id="CHEBI:29105"/>
    </ligand>
</feature>
<feature type="binding site" evidence="1">
    <location>
        <position position="38"/>
    </location>
    <ligand>
        <name>Zn(2+)</name>
        <dbReference type="ChEBI" id="CHEBI:29105"/>
    </ligand>
</feature>
<reference key="1">
    <citation type="journal article" date="1992" name="FEBS Lett.">
        <title>Nucleotide sequence of the genes for ribosomal proteins HS15 and HSH from Haloarcula marismortui: an archaeon-specific gene cluster.</title>
        <authorList>
            <person name="Arndt E."/>
            <person name="Steffens C."/>
        </authorList>
    </citation>
    <scope>NUCLEOTIDE SEQUENCE [GENOMIC DNA]</scope>
</reference>
<reference key="2">
    <citation type="journal article" date="2004" name="Genome Res.">
        <title>Genome sequence of Haloarcula marismortui: a halophilic archaeon from the Dead Sea.</title>
        <authorList>
            <person name="Baliga N.S."/>
            <person name="Bonneau R."/>
            <person name="Facciotti M.T."/>
            <person name="Pan M."/>
            <person name="Glusman G."/>
            <person name="Deutsch E.W."/>
            <person name="Shannon P."/>
            <person name="Chiu Y."/>
            <person name="Weng R.S."/>
            <person name="Gan R.R."/>
            <person name="Hung P."/>
            <person name="Date S.V."/>
            <person name="Marcotte E."/>
            <person name="Hood L."/>
            <person name="Ng W.V."/>
        </authorList>
    </citation>
    <scope>NUCLEOTIDE SEQUENCE [LARGE SCALE GENOMIC DNA]</scope>
    <source>
        <strain>ATCC 43049 / DSM 3752 / JCM 8966 / VKM B-1809</strain>
    </source>
</reference>
<reference key="3">
    <citation type="journal article" date="1986" name="FEBS Lett.">
        <title>Purification and characterization of ribosomal proteins from the 30S subunit of the extreme halophile Halobacterium marismortui.</title>
        <authorList>
            <person name="Shoham M."/>
            <person name="Dijk J."/>
            <person name="Reinhardt R."/>
            <person name="Wittmann-Liebold B."/>
        </authorList>
    </citation>
    <scope>PRELIMINARY PROTEIN SEQUENCE OF 2-17</scope>
</reference>
<comment type="cofactor">
    <cofactor evidence="1">
        <name>Zn(2+)</name>
        <dbReference type="ChEBI" id="CHEBI:29105"/>
    </cofactor>
    <text evidence="1">Binds 1 zinc ion per subunit.</text>
</comment>
<comment type="subunit">
    <text>Part of the 30S ribosomal subunit.</text>
</comment>
<comment type="similarity">
    <text evidence="1">Belongs to the eukaryotic ribosomal protein eS31 family.</text>
</comment>
<name>RS27A_HALMA</name>
<proteinExistence type="evidence at protein level"/>
<evidence type="ECO:0000255" key="1">
    <source>
        <dbReference type="HAMAP-Rule" id="MF_00777"/>
    </source>
</evidence>
<evidence type="ECO:0000305" key="2"/>
<dbReference type="EMBL" id="X70117">
    <property type="protein sequence ID" value="CAA49708.1"/>
    <property type="molecule type" value="Genomic_DNA"/>
</dbReference>
<dbReference type="EMBL" id="AY596297">
    <property type="protein sequence ID" value="AAV47294.1"/>
    <property type="molecule type" value="Genomic_DNA"/>
</dbReference>
<dbReference type="PIR" id="S27036">
    <property type="entry name" value="S27036"/>
</dbReference>
<dbReference type="RefSeq" id="WP_004516109.1">
    <property type="nucleotide sequence ID" value="NZ_CP039138.1"/>
</dbReference>
<dbReference type="STRING" id="272569.rrnAC2489"/>
<dbReference type="PaxDb" id="272569-rrnAC2489"/>
<dbReference type="EnsemblBacteria" id="AAV47294">
    <property type="protein sequence ID" value="AAV47294"/>
    <property type="gene ID" value="rrnAC2489"/>
</dbReference>
<dbReference type="KEGG" id="hma:rrnAC2489"/>
<dbReference type="PATRIC" id="fig|272569.17.peg.3099"/>
<dbReference type="eggNOG" id="arCOG04183">
    <property type="taxonomic scope" value="Archaea"/>
</dbReference>
<dbReference type="HOGENOM" id="CLU_179743_2_0_2"/>
<dbReference type="Proteomes" id="UP000001169">
    <property type="component" value="Chromosome I"/>
</dbReference>
<dbReference type="GO" id="GO:1990904">
    <property type="term" value="C:ribonucleoprotein complex"/>
    <property type="evidence" value="ECO:0007669"/>
    <property type="project" value="UniProtKB-KW"/>
</dbReference>
<dbReference type="GO" id="GO:0005840">
    <property type="term" value="C:ribosome"/>
    <property type="evidence" value="ECO:0007669"/>
    <property type="project" value="UniProtKB-KW"/>
</dbReference>
<dbReference type="GO" id="GO:0003735">
    <property type="term" value="F:structural constituent of ribosome"/>
    <property type="evidence" value="ECO:0007669"/>
    <property type="project" value="InterPro"/>
</dbReference>
<dbReference type="GO" id="GO:0008270">
    <property type="term" value="F:zinc ion binding"/>
    <property type="evidence" value="ECO:0007669"/>
    <property type="project" value="UniProtKB-UniRule"/>
</dbReference>
<dbReference type="GO" id="GO:0006412">
    <property type="term" value="P:translation"/>
    <property type="evidence" value="ECO:0007669"/>
    <property type="project" value="UniProtKB-UniRule"/>
</dbReference>
<dbReference type="Gene3D" id="6.20.50.180">
    <property type="match status" value="1"/>
</dbReference>
<dbReference type="HAMAP" id="MF_00777">
    <property type="entry name" value="Ribosomal_eS31"/>
    <property type="match status" value="1"/>
</dbReference>
<dbReference type="InterPro" id="IPR002906">
    <property type="entry name" value="Ribosomal_eS31"/>
</dbReference>
<dbReference type="InterPro" id="IPR022845">
    <property type="entry name" value="Ribosomal_eS31_arc"/>
</dbReference>
<dbReference type="InterPro" id="IPR011332">
    <property type="entry name" value="Ribosomal_zn-bd"/>
</dbReference>
<dbReference type="NCBIfam" id="NF001669">
    <property type="entry name" value="PRK00432.1"/>
    <property type="match status" value="1"/>
</dbReference>
<dbReference type="Pfam" id="PF01599">
    <property type="entry name" value="Ribosomal_S27"/>
    <property type="match status" value="1"/>
</dbReference>
<dbReference type="SMART" id="SM01402">
    <property type="entry name" value="Ribosomal_S27"/>
    <property type="match status" value="1"/>
</dbReference>
<dbReference type="SUPFAM" id="SSF57829">
    <property type="entry name" value="Zn-binding ribosomal proteins"/>
    <property type="match status" value="1"/>
</dbReference>
<organism>
    <name type="scientific">Haloarcula marismortui (strain ATCC 43049 / DSM 3752 / JCM 8966 / VKM B-1809)</name>
    <name type="common">Halobacterium marismortui</name>
    <dbReference type="NCBI Taxonomy" id="272569"/>
    <lineage>
        <taxon>Archaea</taxon>
        <taxon>Methanobacteriati</taxon>
        <taxon>Methanobacteriota</taxon>
        <taxon>Stenosarchaea group</taxon>
        <taxon>Halobacteria</taxon>
        <taxon>Halobacteriales</taxon>
        <taxon>Haloarculaceae</taxon>
        <taxon>Haloarcula</taxon>
    </lineage>
</organism>